<protein>
    <recommendedName>
        <fullName>Putative thymidylate kinase 251L</fullName>
        <ecNumber>2.7.4.9</ecNumber>
    </recommendedName>
    <alternativeName>
        <fullName>dTMP kinase</fullName>
    </alternativeName>
</protein>
<organismHost>
    <name type="scientific">Acheta domesticus</name>
    <name type="common">House cricket</name>
    <dbReference type="NCBI Taxonomy" id="6997"/>
</organismHost>
<organismHost>
    <name type="scientific">Chilo suppressalis</name>
    <name type="common">Asiatic rice borer moth</name>
    <dbReference type="NCBI Taxonomy" id="168631"/>
</organismHost>
<organismHost>
    <name type="scientific">Gryllus bimaculatus</name>
    <name type="common">Two-spotted cricket</name>
    <dbReference type="NCBI Taxonomy" id="6999"/>
</organismHost>
<organismHost>
    <name type="scientific">Gryllus campestris</name>
    <dbReference type="NCBI Taxonomy" id="58607"/>
</organismHost>
<organismHost>
    <name type="scientific">Spodoptera frugiperda</name>
    <name type="common">Fall armyworm</name>
    <dbReference type="NCBI Taxonomy" id="7108"/>
</organismHost>
<keyword id="KW-0067">ATP-binding</keyword>
<keyword id="KW-0418">Kinase</keyword>
<keyword id="KW-0545">Nucleotide biosynthesis</keyword>
<keyword id="KW-0547">Nucleotide-binding</keyword>
<keyword id="KW-1185">Reference proteome</keyword>
<keyword id="KW-0808">Transferase</keyword>
<organism>
    <name type="scientific">Invertebrate iridescent virus 6</name>
    <name type="common">IIV-6</name>
    <name type="synonym">Chilo iridescent virus</name>
    <dbReference type="NCBI Taxonomy" id="176652"/>
    <lineage>
        <taxon>Viruses</taxon>
        <taxon>Varidnaviria</taxon>
        <taxon>Bamfordvirae</taxon>
        <taxon>Nucleocytoviricota</taxon>
        <taxon>Megaviricetes</taxon>
        <taxon>Pimascovirales</taxon>
        <taxon>Iridoviridae</taxon>
        <taxon>Betairidovirinae</taxon>
        <taxon>Iridovirus</taxon>
    </lineage>
</organism>
<proteinExistence type="inferred from homology"/>
<comment type="function">
    <text evidence="1">Catalyzes the conversion of dTMP to dTDP.</text>
</comment>
<comment type="catalytic activity">
    <reaction>
        <text>dTMP + ATP = dTDP + ADP</text>
        <dbReference type="Rhea" id="RHEA:13517"/>
        <dbReference type="ChEBI" id="CHEBI:30616"/>
        <dbReference type="ChEBI" id="CHEBI:58369"/>
        <dbReference type="ChEBI" id="CHEBI:63528"/>
        <dbReference type="ChEBI" id="CHEBI:456216"/>
        <dbReference type="EC" id="2.7.4.9"/>
    </reaction>
</comment>
<comment type="pathway">
    <text>Pyrimidine metabolism; dTTP biosynthesis.</text>
</comment>
<comment type="similarity">
    <text evidence="3">Belongs to the thymidylate kinase family.</text>
</comment>
<accession>Q91FS1</accession>
<name>KTHY_IIV6</name>
<sequence>MSLKQSFPLLETRGLLIVFEGCDKTGKSTQCKLLFEELKQKNIEVRMINFPNRTTQTGKLIDQYLKGKIYLSDEDIHILFSKNRWEIIDTIKTNILNGITVIIDRYSYSGIAFSVAKGLDFQWCKQTENGLLKPDIIIYLTGQTKNMASRNGYGSEIYERIEIQDKVKKCYEKMIEIPLWNKINADQDVLIIKKQIETIIQKFSLENNKLEYI</sequence>
<reference key="1">
    <citation type="journal article" date="2001" name="Virology">
        <title>Analysis of the first complete DNA sequence of an invertebrate iridovirus: coding strategy of the genome of Chilo iridescent virus.</title>
        <authorList>
            <person name="Jakob N.J."/>
            <person name="Mueller K."/>
            <person name="Bahr U."/>
            <person name="Darai G."/>
        </authorList>
    </citation>
    <scope>NUCLEOTIDE SEQUENCE [LARGE SCALE GENOMIC DNA]</scope>
</reference>
<reference key="2">
    <citation type="journal article" date="2007" name="Virol. J.">
        <title>Comparative genomic analysis of the family Iridoviridae: re-annotating and defining the core set of iridovirus genes.</title>
        <authorList>
            <person name="Eaton H.E."/>
            <person name="Metcalf J."/>
            <person name="Penny E."/>
            <person name="Tcherepanov V."/>
            <person name="Upton C."/>
            <person name="Brunetti C.R."/>
        </authorList>
    </citation>
    <scope>GENOME REANNOTATION</scope>
</reference>
<feature type="chain" id="PRO_0000376900" description="Putative thymidylate kinase 251L">
    <location>
        <begin position="1"/>
        <end position="213"/>
    </location>
</feature>
<feature type="binding site" evidence="2">
    <location>
        <begin position="21"/>
        <end position="28"/>
    </location>
    <ligand>
        <name>ATP</name>
        <dbReference type="ChEBI" id="CHEBI:30616"/>
    </ligand>
</feature>
<dbReference type="EC" id="2.7.4.9"/>
<dbReference type="EMBL" id="AF303741">
    <property type="protein sequence ID" value="AAK82112.1"/>
    <property type="molecule type" value="Genomic_DNA"/>
</dbReference>
<dbReference type="RefSeq" id="NP_149714.1">
    <property type="nucleotide sequence ID" value="NC_003038.1"/>
</dbReference>
<dbReference type="SMR" id="Q91FS1"/>
<dbReference type="KEGG" id="vg:1733213"/>
<dbReference type="OrthoDB" id="9060at10239"/>
<dbReference type="UniPathway" id="UPA00575"/>
<dbReference type="Proteomes" id="UP000001359">
    <property type="component" value="Genome"/>
</dbReference>
<dbReference type="GO" id="GO:0005524">
    <property type="term" value="F:ATP binding"/>
    <property type="evidence" value="ECO:0007669"/>
    <property type="project" value="UniProtKB-KW"/>
</dbReference>
<dbReference type="GO" id="GO:0004798">
    <property type="term" value="F:dTMP kinase activity"/>
    <property type="evidence" value="ECO:0007669"/>
    <property type="project" value="UniProtKB-EC"/>
</dbReference>
<dbReference type="GO" id="GO:0004550">
    <property type="term" value="F:nucleoside diphosphate kinase activity"/>
    <property type="evidence" value="ECO:0007669"/>
    <property type="project" value="TreeGrafter"/>
</dbReference>
<dbReference type="GO" id="GO:0006233">
    <property type="term" value="P:dTDP biosynthetic process"/>
    <property type="evidence" value="ECO:0007669"/>
    <property type="project" value="InterPro"/>
</dbReference>
<dbReference type="GO" id="GO:0006235">
    <property type="term" value="P:dTTP biosynthetic process"/>
    <property type="evidence" value="ECO:0007669"/>
    <property type="project" value="UniProtKB-UniPathway"/>
</dbReference>
<dbReference type="GO" id="GO:0006227">
    <property type="term" value="P:dUDP biosynthetic process"/>
    <property type="evidence" value="ECO:0007669"/>
    <property type="project" value="TreeGrafter"/>
</dbReference>
<dbReference type="CDD" id="cd01672">
    <property type="entry name" value="TMPK"/>
    <property type="match status" value="1"/>
</dbReference>
<dbReference type="FunFam" id="3.40.50.300:FF:000679">
    <property type="entry name" value="Thymidylate kinase"/>
    <property type="match status" value="1"/>
</dbReference>
<dbReference type="Gene3D" id="3.40.50.300">
    <property type="entry name" value="P-loop containing nucleotide triphosphate hydrolases"/>
    <property type="match status" value="1"/>
</dbReference>
<dbReference type="HAMAP" id="MF_00165">
    <property type="entry name" value="Thymidylate_kinase"/>
    <property type="match status" value="1"/>
</dbReference>
<dbReference type="InterPro" id="IPR027417">
    <property type="entry name" value="P-loop_NTPase"/>
</dbReference>
<dbReference type="InterPro" id="IPR039430">
    <property type="entry name" value="Thymidylate_kin-like_dom"/>
</dbReference>
<dbReference type="InterPro" id="IPR018095">
    <property type="entry name" value="Thymidylate_kin_CS"/>
</dbReference>
<dbReference type="InterPro" id="IPR018094">
    <property type="entry name" value="Thymidylate_kinase"/>
</dbReference>
<dbReference type="NCBIfam" id="TIGR00041">
    <property type="entry name" value="DTMP_kinase"/>
    <property type="match status" value="1"/>
</dbReference>
<dbReference type="PANTHER" id="PTHR10344">
    <property type="entry name" value="THYMIDYLATE KINASE"/>
    <property type="match status" value="1"/>
</dbReference>
<dbReference type="PANTHER" id="PTHR10344:SF1">
    <property type="entry name" value="THYMIDYLATE KINASE"/>
    <property type="match status" value="1"/>
</dbReference>
<dbReference type="Pfam" id="PF02223">
    <property type="entry name" value="Thymidylate_kin"/>
    <property type="match status" value="1"/>
</dbReference>
<dbReference type="SUPFAM" id="SSF52540">
    <property type="entry name" value="P-loop containing nucleoside triphosphate hydrolases"/>
    <property type="match status" value="1"/>
</dbReference>
<dbReference type="PROSITE" id="PS01331">
    <property type="entry name" value="THYMIDYLATE_KINASE"/>
    <property type="match status" value="1"/>
</dbReference>
<evidence type="ECO:0000250" key="1"/>
<evidence type="ECO:0000255" key="2"/>
<evidence type="ECO:0000305" key="3"/>
<gene>
    <name type="ORF">IIV6-251L</name>
</gene>